<organism>
    <name type="scientific">Acinetobacter baylyi (strain ATCC 33305 / BD413 / ADP1)</name>
    <dbReference type="NCBI Taxonomy" id="62977"/>
    <lineage>
        <taxon>Bacteria</taxon>
        <taxon>Pseudomonadati</taxon>
        <taxon>Pseudomonadota</taxon>
        <taxon>Gammaproteobacteria</taxon>
        <taxon>Moraxellales</taxon>
        <taxon>Moraxellaceae</taxon>
        <taxon>Acinetobacter</taxon>
    </lineage>
</organism>
<protein>
    <recommendedName>
        <fullName evidence="1">tRNA 5-methylaminomethyl-2-thiouridine biosynthesis bifunctional protein MnmC</fullName>
        <shortName evidence="1">tRNA mnm(5)s(2)U biosynthesis bifunctional protein</shortName>
    </recommendedName>
    <domain>
        <recommendedName>
            <fullName evidence="1">tRNA (mnm(5)s(2)U34)-methyltransferase</fullName>
            <ecNumber evidence="1">2.1.1.61</ecNumber>
        </recommendedName>
    </domain>
    <domain>
        <recommendedName>
            <fullName evidence="1">FAD-dependent cmnm(5)s(2)U34 oxidoreductase</fullName>
            <ecNumber evidence="1">1.5.-.-</ecNumber>
        </recommendedName>
    </domain>
</protein>
<accession>Q6F7Y9</accession>
<evidence type="ECO:0000255" key="1">
    <source>
        <dbReference type="HAMAP-Rule" id="MF_01102"/>
    </source>
</evidence>
<dbReference type="EC" id="2.1.1.61" evidence="1"/>
<dbReference type="EC" id="1.5.-.-" evidence="1"/>
<dbReference type="EMBL" id="CR543861">
    <property type="protein sequence ID" value="CAG69826.1"/>
    <property type="molecule type" value="Genomic_DNA"/>
</dbReference>
<dbReference type="RefSeq" id="WP_011182705.1">
    <property type="nucleotide sequence ID" value="NC_005966.1"/>
</dbReference>
<dbReference type="SMR" id="Q6F7Y9"/>
<dbReference type="STRING" id="202950.GCA_001485005_02786"/>
<dbReference type="GeneID" id="45235348"/>
<dbReference type="KEGG" id="aci:ACIAD3135"/>
<dbReference type="eggNOG" id="COG0665">
    <property type="taxonomic scope" value="Bacteria"/>
</dbReference>
<dbReference type="eggNOG" id="COG4121">
    <property type="taxonomic scope" value="Bacteria"/>
</dbReference>
<dbReference type="HOGENOM" id="CLU_022427_2_0_6"/>
<dbReference type="Proteomes" id="UP000000430">
    <property type="component" value="Chromosome"/>
</dbReference>
<dbReference type="GO" id="GO:0005737">
    <property type="term" value="C:cytoplasm"/>
    <property type="evidence" value="ECO:0007669"/>
    <property type="project" value="UniProtKB-SubCell"/>
</dbReference>
<dbReference type="GO" id="GO:0050660">
    <property type="term" value="F:flavin adenine dinucleotide binding"/>
    <property type="evidence" value="ECO:0007669"/>
    <property type="project" value="UniProtKB-UniRule"/>
</dbReference>
<dbReference type="GO" id="GO:0016645">
    <property type="term" value="F:oxidoreductase activity, acting on the CH-NH group of donors"/>
    <property type="evidence" value="ECO:0007669"/>
    <property type="project" value="InterPro"/>
</dbReference>
<dbReference type="GO" id="GO:0004808">
    <property type="term" value="F:tRNA (5-methylaminomethyl-2-thiouridylate)(34)-methyltransferase activity"/>
    <property type="evidence" value="ECO:0007669"/>
    <property type="project" value="UniProtKB-EC"/>
</dbReference>
<dbReference type="GO" id="GO:0032259">
    <property type="term" value="P:methylation"/>
    <property type="evidence" value="ECO:0007669"/>
    <property type="project" value="UniProtKB-KW"/>
</dbReference>
<dbReference type="GO" id="GO:0002097">
    <property type="term" value="P:tRNA wobble base modification"/>
    <property type="evidence" value="ECO:0007669"/>
    <property type="project" value="UniProtKB-UniRule"/>
</dbReference>
<dbReference type="Gene3D" id="3.30.9.10">
    <property type="entry name" value="D-Amino Acid Oxidase, subunit A, domain 2"/>
    <property type="match status" value="1"/>
</dbReference>
<dbReference type="Gene3D" id="3.50.50.60">
    <property type="entry name" value="FAD/NAD(P)-binding domain"/>
    <property type="match status" value="1"/>
</dbReference>
<dbReference type="Gene3D" id="3.40.50.150">
    <property type="entry name" value="Vaccinia Virus protein VP39"/>
    <property type="match status" value="1"/>
</dbReference>
<dbReference type="HAMAP" id="MF_01102">
    <property type="entry name" value="MnmC"/>
    <property type="match status" value="1"/>
</dbReference>
<dbReference type="InterPro" id="IPR006076">
    <property type="entry name" value="FAD-dep_OxRdtase"/>
</dbReference>
<dbReference type="InterPro" id="IPR036188">
    <property type="entry name" value="FAD/NAD-bd_sf"/>
</dbReference>
<dbReference type="InterPro" id="IPR008471">
    <property type="entry name" value="MnmC-like_methylTransf"/>
</dbReference>
<dbReference type="InterPro" id="IPR029063">
    <property type="entry name" value="SAM-dependent_MTases_sf"/>
</dbReference>
<dbReference type="InterPro" id="IPR023032">
    <property type="entry name" value="tRNA_MAMT_biosynth_bifunc_MnmC"/>
</dbReference>
<dbReference type="InterPro" id="IPR047785">
    <property type="entry name" value="tRNA_MNMC2"/>
</dbReference>
<dbReference type="InterPro" id="IPR017610">
    <property type="entry name" value="tRNA_S-uridine_synth_MnmC_C"/>
</dbReference>
<dbReference type="NCBIfam" id="TIGR03197">
    <property type="entry name" value="MnmC_Cterm"/>
    <property type="match status" value="1"/>
</dbReference>
<dbReference type="NCBIfam" id="NF033855">
    <property type="entry name" value="tRNA_MNMC2"/>
    <property type="match status" value="1"/>
</dbReference>
<dbReference type="PANTHER" id="PTHR13847">
    <property type="entry name" value="SARCOSINE DEHYDROGENASE-RELATED"/>
    <property type="match status" value="1"/>
</dbReference>
<dbReference type="PANTHER" id="PTHR13847:SF283">
    <property type="entry name" value="TRNA 5-METHYLAMINOMETHYL-2-THIOURIDINE BIOSYNTHESIS BIFUNCTIONAL PROTEIN MNMC"/>
    <property type="match status" value="1"/>
</dbReference>
<dbReference type="Pfam" id="PF01266">
    <property type="entry name" value="DAO"/>
    <property type="match status" value="1"/>
</dbReference>
<dbReference type="Pfam" id="PF05430">
    <property type="entry name" value="Methyltransf_30"/>
    <property type="match status" value="1"/>
</dbReference>
<dbReference type="SUPFAM" id="SSF51971">
    <property type="entry name" value="Nucleotide-binding domain"/>
    <property type="match status" value="1"/>
</dbReference>
<name>MNMC_ACIAD</name>
<comment type="function">
    <text evidence="1">Catalyzes the last two steps in the biosynthesis of 5-methylaminomethyl-2-thiouridine (mnm(5)s(2)U) at the wobble position (U34) in tRNA. Catalyzes the FAD-dependent demodification of cmnm(5)s(2)U34 to nm(5)s(2)U34, followed by the transfer of a methyl group from S-adenosyl-L-methionine to nm(5)s(2)U34, to form mnm(5)s(2)U34.</text>
</comment>
<comment type="catalytic activity">
    <reaction evidence="1">
        <text>5-aminomethyl-2-thiouridine(34) in tRNA + S-adenosyl-L-methionine = 5-methylaminomethyl-2-thiouridine(34) in tRNA + S-adenosyl-L-homocysteine + H(+)</text>
        <dbReference type="Rhea" id="RHEA:19569"/>
        <dbReference type="Rhea" id="RHEA-COMP:10195"/>
        <dbReference type="Rhea" id="RHEA-COMP:10197"/>
        <dbReference type="ChEBI" id="CHEBI:15378"/>
        <dbReference type="ChEBI" id="CHEBI:57856"/>
        <dbReference type="ChEBI" id="CHEBI:59789"/>
        <dbReference type="ChEBI" id="CHEBI:74454"/>
        <dbReference type="ChEBI" id="CHEBI:74455"/>
        <dbReference type="EC" id="2.1.1.61"/>
    </reaction>
</comment>
<comment type="cofactor">
    <cofactor evidence="1">
        <name>FAD</name>
        <dbReference type="ChEBI" id="CHEBI:57692"/>
    </cofactor>
</comment>
<comment type="subcellular location">
    <subcellularLocation>
        <location evidence="1">Cytoplasm</location>
    </subcellularLocation>
</comment>
<comment type="similarity">
    <text evidence="1">In the N-terminal section; belongs to the methyltransferase superfamily. tRNA (mnm(5)s(2)U34)-methyltransferase family.</text>
</comment>
<comment type="similarity">
    <text evidence="1">In the C-terminal section; belongs to the DAO family.</text>
</comment>
<keyword id="KW-0963">Cytoplasm</keyword>
<keyword id="KW-0274">FAD</keyword>
<keyword id="KW-0285">Flavoprotein</keyword>
<keyword id="KW-0489">Methyltransferase</keyword>
<keyword id="KW-0511">Multifunctional enzyme</keyword>
<keyword id="KW-0560">Oxidoreductase</keyword>
<keyword id="KW-0949">S-adenosyl-L-methionine</keyword>
<keyword id="KW-0808">Transferase</keyword>
<keyword id="KW-0819">tRNA processing</keyword>
<proteinExistence type="inferred from homology"/>
<gene>
    <name evidence="1" type="primary">mnmC</name>
    <name type="ordered locus">ACIAD3135</name>
</gene>
<reference key="1">
    <citation type="journal article" date="2004" name="Nucleic Acids Res.">
        <title>Unique features revealed by the genome sequence of Acinetobacter sp. ADP1, a versatile and naturally transformation competent bacterium.</title>
        <authorList>
            <person name="Barbe V."/>
            <person name="Vallenet D."/>
            <person name="Fonknechten N."/>
            <person name="Kreimeyer A."/>
            <person name="Oztas S."/>
            <person name="Labarre L."/>
            <person name="Cruveiller S."/>
            <person name="Robert C."/>
            <person name="Duprat S."/>
            <person name="Wincker P."/>
            <person name="Ornston L.N."/>
            <person name="Weissenbach J."/>
            <person name="Marliere P."/>
            <person name="Cohen G.N."/>
            <person name="Medigue C."/>
        </authorList>
    </citation>
    <scope>NUCLEOTIDE SEQUENCE [LARGE SCALE GENOMIC DNA]</scope>
    <source>
        <strain>ATCC 33305 / BD413 / ADP1</strain>
    </source>
</reference>
<feature type="chain" id="PRO_0000347936" description="tRNA 5-methylaminomethyl-2-thiouridine biosynthesis bifunctional protein MnmC">
    <location>
        <begin position="1"/>
        <end position="623"/>
    </location>
</feature>
<feature type="region of interest" description="tRNA (mnm(5)s(2)U34)-methyltransferase">
    <location>
        <begin position="1"/>
        <end position="244"/>
    </location>
</feature>
<feature type="region of interest" description="FAD-dependent cmnm(5)s(2)U34 oxidoreductase">
    <location>
        <begin position="268"/>
        <end position="623"/>
    </location>
</feature>
<sequence length="623" mass="70280">MCVSSSIQTAILDWQCVDGIDIPVSRQFGDVYFSKDNGLLETRHVFLNGNNLTERLADLKPYQYFCVGETGFGTGLNILAVWQLWQQVRPDNHSHLHVISVEKFPLSKSDLERALRAWPELIILAEQLIEQYPFPIAGCHRLNFPDERFSLDLWLGDAHDVFPSIVKTHSVDAWFLDGFAPSCNPELWETQVLNQIVRLSDYGTTFASFSVAGILKRGLKAHGIHISRPRGFGHKREMLKAIWPFPDHESTTTVKGNQPSTQQHFAVIGAGIAGLHCAWSLAQRGHRVTLVDQSQPLSGASGNPLALLNPKLCPITQCHDHLMVLCWQYARRFYQNFEAFRLIQVNQLALKASDSLLNLAEQYPKDVLDAHSAQQSPLETQYDYLTLHYAGVISPQLFCNQVLQHPLIEFKQFKINQIIEIDGTVQLLSSEQAILESNAAIVCCARESGKLFEQYPTLKPIRGQVSWFEQHTFPFAPDQAFSYGGYCMQLHPQQLILGASFHPQRDDDEVLLEDHVHNFNLIHSVFPAYAQTLPPVEEWHGRASVRAQSPDYFPLVGQLQDHSKLFTLAGLGSKGYLFAPLNSEILVAHILGEACPVSANLLQKLNPQRFLKKVKIKKPYYSS</sequence>